<evidence type="ECO:0000255" key="1">
    <source>
        <dbReference type="HAMAP-Rule" id="MF_00532"/>
    </source>
</evidence>
<evidence type="ECO:0000256" key="2">
    <source>
        <dbReference type="SAM" id="MobiDB-lite"/>
    </source>
</evidence>
<evidence type="ECO:0000305" key="3"/>
<comment type="similarity">
    <text evidence="1">Belongs to the universal ribosomal protein uS9 family.</text>
</comment>
<sequence>MASVIGYYGTGRRKTAVARVYLRPGDGKVKVNGKEYESLNDYFKNIAWTKHAIEPLEVTNTIGKFDLVIRVNGGGLSGQAGAVRLGIARALLQYDENLKPVLKKYKMLTRDPREVERKKYGLKKARRAPQFSKR</sequence>
<name>RS9_THENN</name>
<proteinExistence type="inferred from homology"/>
<protein>
    <recommendedName>
        <fullName evidence="1">Small ribosomal subunit protein uS9</fullName>
    </recommendedName>
    <alternativeName>
        <fullName evidence="3">30S ribosomal protein S9</fullName>
    </alternativeName>
</protein>
<keyword id="KW-0687">Ribonucleoprotein</keyword>
<keyword id="KW-0689">Ribosomal protein</keyword>
<organism>
    <name type="scientific">Thermotoga neapolitana (strain ATCC 49049 / DSM 4359 / NBRC 107923 / NS-E)</name>
    <dbReference type="NCBI Taxonomy" id="309803"/>
    <lineage>
        <taxon>Bacteria</taxon>
        <taxon>Thermotogati</taxon>
        <taxon>Thermotogota</taxon>
        <taxon>Thermotogae</taxon>
        <taxon>Thermotogales</taxon>
        <taxon>Thermotogaceae</taxon>
        <taxon>Thermotoga</taxon>
    </lineage>
</organism>
<accession>B9K8D3</accession>
<gene>
    <name evidence="1" type="primary">rpsI</name>
    <name type="ordered locus">CTN_1040</name>
</gene>
<reference key="1">
    <citation type="submission" date="2007-11" db="EMBL/GenBank/DDBJ databases">
        <title>The genome sequence of the hyperthermophilic bacterium Thermotoga neapolitana.</title>
        <authorList>
            <person name="Lim S.K."/>
            <person name="Kim J.S."/>
            <person name="Cha S.H."/>
            <person name="Park B.C."/>
            <person name="Lee D.S."/>
            <person name="Tae H.S."/>
            <person name="Kim S.-J."/>
            <person name="Kim J.J."/>
            <person name="Park K.J."/>
            <person name="Lee S.Y."/>
        </authorList>
    </citation>
    <scope>NUCLEOTIDE SEQUENCE [LARGE SCALE GENOMIC DNA]</scope>
    <source>
        <strain>ATCC 49049 / DSM 4359 / NBRC 107923 / NS-E</strain>
    </source>
</reference>
<feature type="chain" id="PRO_1000146477" description="Small ribosomal subunit protein uS9">
    <location>
        <begin position="1"/>
        <end position="134"/>
    </location>
</feature>
<feature type="region of interest" description="Disordered" evidence="2">
    <location>
        <begin position="114"/>
        <end position="134"/>
    </location>
</feature>
<feature type="compositionally biased region" description="Basic residues" evidence="2">
    <location>
        <begin position="120"/>
        <end position="134"/>
    </location>
</feature>
<dbReference type="EMBL" id="CP000916">
    <property type="protein sequence ID" value="ACM23216.1"/>
    <property type="molecule type" value="Genomic_DNA"/>
</dbReference>
<dbReference type="RefSeq" id="WP_015919532.1">
    <property type="nucleotide sequence ID" value="NC_011978.1"/>
</dbReference>
<dbReference type="SMR" id="B9K8D3"/>
<dbReference type="STRING" id="309803.CTN_1040"/>
<dbReference type="KEGG" id="tna:CTN_1040"/>
<dbReference type="eggNOG" id="COG0103">
    <property type="taxonomic scope" value="Bacteria"/>
</dbReference>
<dbReference type="HOGENOM" id="CLU_046483_2_1_0"/>
<dbReference type="Proteomes" id="UP000000445">
    <property type="component" value="Chromosome"/>
</dbReference>
<dbReference type="GO" id="GO:0022627">
    <property type="term" value="C:cytosolic small ribosomal subunit"/>
    <property type="evidence" value="ECO:0007669"/>
    <property type="project" value="TreeGrafter"/>
</dbReference>
<dbReference type="GO" id="GO:0003723">
    <property type="term" value="F:RNA binding"/>
    <property type="evidence" value="ECO:0007669"/>
    <property type="project" value="TreeGrafter"/>
</dbReference>
<dbReference type="GO" id="GO:0003735">
    <property type="term" value="F:structural constituent of ribosome"/>
    <property type="evidence" value="ECO:0007669"/>
    <property type="project" value="InterPro"/>
</dbReference>
<dbReference type="GO" id="GO:0006412">
    <property type="term" value="P:translation"/>
    <property type="evidence" value="ECO:0007669"/>
    <property type="project" value="UniProtKB-UniRule"/>
</dbReference>
<dbReference type="FunFam" id="3.30.230.10:FF:000001">
    <property type="entry name" value="30S ribosomal protein S9"/>
    <property type="match status" value="1"/>
</dbReference>
<dbReference type="Gene3D" id="3.30.230.10">
    <property type="match status" value="1"/>
</dbReference>
<dbReference type="HAMAP" id="MF_00532_B">
    <property type="entry name" value="Ribosomal_uS9_B"/>
    <property type="match status" value="1"/>
</dbReference>
<dbReference type="InterPro" id="IPR020568">
    <property type="entry name" value="Ribosomal_Su5_D2-typ_SF"/>
</dbReference>
<dbReference type="InterPro" id="IPR000754">
    <property type="entry name" value="Ribosomal_uS9"/>
</dbReference>
<dbReference type="InterPro" id="IPR023035">
    <property type="entry name" value="Ribosomal_uS9_bac/plastid"/>
</dbReference>
<dbReference type="InterPro" id="IPR020574">
    <property type="entry name" value="Ribosomal_uS9_CS"/>
</dbReference>
<dbReference type="InterPro" id="IPR014721">
    <property type="entry name" value="Ribsml_uS5_D2-typ_fold_subgr"/>
</dbReference>
<dbReference type="NCBIfam" id="NF001099">
    <property type="entry name" value="PRK00132.1"/>
    <property type="match status" value="1"/>
</dbReference>
<dbReference type="PANTHER" id="PTHR21569">
    <property type="entry name" value="RIBOSOMAL PROTEIN S9"/>
    <property type="match status" value="1"/>
</dbReference>
<dbReference type="PANTHER" id="PTHR21569:SF1">
    <property type="entry name" value="SMALL RIBOSOMAL SUBUNIT PROTEIN US9M"/>
    <property type="match status" value="1"/>
</dbReference>
<dbReference type="Pfam" id="PF00380">
    <property type="entry name" value="Ribosomal_S9"/>
    <property type="match status" value="1"/>
</dbReference>
<dbReference type="SUPFAM" id="SSF54211">
    <property type="entry name" value="Ribosomal protein S5 domain 2-like"/>
    <property type="match status" value="1"/>
</dbReference>
<dbReference type="PROSITE" id="PS00360">
    <property type="entry name" value="RIBOSOMAL_S9"/>
    <property type="match status" value="1"/>
</dbReference>